<protein>
    <recommendedName>
        <fullName>Putative laccase-19</fullName>
        <ecNumber>1.10.3.2</ecNumber>
    </recommendedName>
    <alternativeName>
        <fullName>Benzenediol:oxygen oxidoreductase 19</fullName>
    </alternativeName>
    <alternativeName>
        <fullName>Diphenol oxidase 19</fullName>
    </alternativeName>
    <alternativeName>
        <fullName>Urishiol oxidase 19</fullName>
    </alternativeName>
</protein>
<evidence type="ECO:0000250" key="1"/>
<evidence type="ECO:0000255" key="2"/>
<evidence type="ECO:0000256" key="3">
    <source>
        <dbReference type="SAM" id="MobiDB-lite"/>
    </source>
</evidence>
<evidence type="ECO:0000305" key="4"/>
<accession>A2Y9C5</accession>
<dbReference type="EC" id="1.10.3.2"/>
<dbReference type="EMBL" id="CM000131">
    <property type="protein sequence ID" value="EAY99685.1"/>
    <property type="molecule type" value="Genomic_DNA"/>
</dbReference>
<dbReference type="SMR" id="A2Y9C5"/>
<dbReference type="STRING" id="39946.A2Y9C5"/>
<dbReference type="GlyCosmos" id="A2Y9C5">
    <property type="glycosylation" value="9 sites, No reported glycans"/>
</dbReference>
<dbReference type="EnsemblPlants" id="BGIOSGA021910-TA">
    <property type="protein sequence ID" value="BGIOSGA021910-PA"/>
    <property type="gene ID" value="BGIOSGA021910"/>
</dbReference>
<dbReference type="Gramene" id="BGIOSGA021910-TA">
    <property type="protein sequence ID" value="BGIOSGA021910-PA"/>
    <property type="gene ID" value="BGIOSGA021910"/>
</dbReference>
<dbReference type="HOGENOM" id="CLU_006504_6_3_1"/>
<dbReference type="OMA" id="NVSFHHP"/>
<dbReference type="Proteomes" id="UP000007015">
    <property type="component" value="Chromosome 6"/>
</dbReference>
<dbReference type="GO" id="GO:0048046">
    <property type="term" value="C:apoplast"/>
    <property type="evidence" value="ECO:0007669"/>
    <property type="project" value="UniProtKB-SubCell"/>
</dbReference>
<dbReference type="GO" id="GO:0005507">
    <property type="term" value="F:copper ion binding"/>
    <property type="evidence" value="ECO:0007669"/>
    <property type="project" value="InterPro"/>
</dbReference>
<dbReference type="GO" id="GO:0052716">
    <property type="term" value="F:hydroquinone:oxygen oxidoreductase activity"/>
    <property type="evidence" value="ECO:0007669"/>
    <property type="project" value="UniProtKB-EC"/>
</dbReference>
<dbReference type="GO" id="GO:0046274">
    <property type="term" value="P:lignin catabolic process"/>
    <property type="evidence" value="ECO:0007669"/>
    <property type="project" value="UniProtKB-KW"/>
</dbReference>
<dbReference type="CDD" id="cd13849">
    <property type="entry name" value="CuRO_1_LCC_plant"/>
    <property type="match status" value="1"/>
</dbReference>
<dbReference type="CDD" id="cd13875">
    <property type="entry name" value="CuRO_2_LCC_plant"/>
    <property type="match status" value="1"/>
</dbReference>
<dbReference type="CDD" id="cd13897">
    <property type="entry name" value="CuRO_3_LCC_plant"/>
    <property type="match status" value="1"/>
</dbReference>
<dbReference type="Gene3D" id="2.60.40.420">
    <property type="entry name" value="Cupredoxins - blue copper proteins"/>
    <property type="match status" value="3"/>
</dbReference>
<dbReference type="InterPro" id="IPR011707">
    <property type="entry name" value="Cu-oxidase-like_N"/>
</dbReference>
<dbReference type="InterPro" id="IPR001117">
    <property type="entry name" value="Cu-oxidase_2nd"/>
</dbReference>
<dbReference type="InterPro" id="IPR011706">
    <property type="entry name" value="Cu-oxidase_C"/>
</dbReference>
<dbReference type="InterPro" id="IPR045087">
    <property type="entry name" value="Cu-oxidase_fam"/>
</dbReference>
<dbReference type="InterPro" id="IPR033138">
    <property type="entry name" value="Cu_oxidase_CS"/>
</dbReference>
<dbReference type="InterPro" id="IPR002355">
    <property type="entry name" value="Cu_oxidase_Cu_BS"/>
</dbReference>
<dbReference type="InterPro" id="IPR008972">
    <property type="entry name" value="Cupredoxin"/>
</dbReference>
<dbReference type="InterPro" id="IPR034288">
    <property type="entry name" value="CuRO_1_LCC"/>
</dbReference>
<dbReference type="InterPro" id="IPR034285">
    <property type="entry name" value="CuRO_2_LCC"/>
</dbReference>
<dbReference type="InterPro" id="IPR034289">
    <property type="entry name" value="CuRO_3_LCC"/>
</dbReference>
<dbReference type="InterPro" id="IPR017761">
    <property type="entry name" value="Laccase"/>
</dbReference>
<dbReference type="NCBIfam" id="TIGR03389">
    <property type="entry name" value="laccase"/>
    <property type="match status" value="1"/>
</dbReference>
<dbReference type="PANTHER" id="PTHR11709:SF86">
    <property type="entry name" value="LACCASE-18"/>
    <property type="match status" value="1"/>
</dbReference>
<dbReference type="PANTHER" id="PTHR11709">
    <property type="entry name" value="MULTI-COPPER OXIDASE"/>
    <property type="match status" value="1"/>
</dbReference>
<dbReference type="Pfam" id="PF00394">
    <property type="entry name" value="Cu-oxidase"/>
    <property type="match status" value="1"/>
</dbReference>
<dbReference type="Pfam" id="PF07731">
    <property type="entry name" value="Cu-oxidase_2"/>
    <property type="match status" value="1"/>
</dbReference>
<dbReference type="Pfam" id="PF07732">
    <property type="entry name" value="Cu-oxidase_3"/>
    <property type="match status" value="1"/>
</dbReference>
<dbReference type="SUPFAM" id="SSF49503">
    <property type="entry name" value="Cupredoxins"/>
    <property type="match status" value="3"/>
</dbReference>
<dbReference type="PROSITE" id="PS00079">
    <property type="entry name" value="MULTICOPPER_OXIDASE1"/>
    <property type="match status" value="1"/>
</dbReference>
<dbReference type="PROSITE" id="PS00080">
    <property type="entry name" value="MULTICOPPER_OXIDASE2"/>
    <property type="match status" value="1"/>
</dbReference>
<proteinExistence type="inferred from homology"/>
<gene>
    <name type="primary">LAC19</name>
    <name type="ORF">OsI_020918</name>
</gene>
<comment type="function">
    <text evidence="1">Lignin degradation and detoxification of lignin-derived products.</text>
</comment>
<comment type="catalytic activity">
    <reaction>
        <text>4 hydroquinone + O2 = 4 benzosemiquinone + 2 H2O</text>
        <dbReference type="Rhea" id="RHEA:11276"/>
        <dbReference type="ChEBI" id="CHEBI:15377"/>
        <dbReference type="ChEBI" id="CHEBI:15379"/>
        <dbReference type="ChEBI" id="CHEBI:17594"/>
        <dbReference type="ChEBI" id="CHEBI:17977"/>
        <dbReference type="EC" id="1.10.3.2"/>
    </reaction>
</comment>
<comment type="cofactor">
    <cofactor evidence="1">
        <name>Cu cation</name>
        <dbReference type="ChEBI" id="CHEBI:23378"/>
    </cofactor>
    <text evidence="1">Binds 4 Cu cations per monomer.</text>
</comment>
<comment type="subcellular location">
    <subcellularLocation>
        <location evidence="4">Secreted</location>
        <location evidence="4">Extracellular space</location>
        <location evidence="4">Apoplast</location>
    </subcellularLocation>
</comment>
<comment type="similarity">
    <text evidence="4">Belongs to the multicopper oxidase family.</text>
</comment>
<organism>
    <name type="scientific">Oryza sativa subsp. indica</name>
    <name type="common">Rice</name>
    <dbReference type="NCBI Taxonomy" id="39946"/>
    <lineage>
        <taxon>Eukaryota</taxon>
        <taxon>Viridiplantae</taxon>
        <taxon>Streptophyta</taxon>
        <taxon>Embryophyta</taxon>
        <taxon>Tracheophyta</taxon>
        <taxon>Spermatophyta</taxon>
        <taxon>Magnoliopsida</taxon>
        <taxon>Liliopsida</taxon>
        <taxon>Poales</taxon>
        <taxon>Poaceae</taxon>
        <taxon>BOP clade</taxon>
        <taxon>Oryzoideae</taxon>
        <taxon>Oryzeae</taxon>
        <taxon>Oryzinae</taxon>
        <taxon>Oryza</taxon>
        <taxon>Oryza sativa</taxon>
    </lineage>
</organism>
<keyword id="KW-0052">Apoplast</keyword>
<keyword id="KW-0186">Copper</keyword>
<keyword id="KW-0325">Glycoprotein</keyword>
<keyword id="KW-0439">Lignin degradation</keyword>
<keyword id="KW-0479">Metal-binding</keyword>
<keyword id="KW-0560">Oxidoreductase</keyword>
<keyword id="KW-1185">Reference proteome</keyword>
<keyword id="KW-0677">Repeat</keyword>
<keyword id="KW-0964">Secreted</keyword>
<keyword id="KW-0732">Signal</keyword>
<reference key="1">
    <citation type="journal article" date="2005" name="PLoS Biol.">
        <title>The genomes of Oryza sativa: a history of duplications.</title>
        <authorList>
            <person name="Yu J."/>
            <person name="Wang J."/>
            <person name="Lin W."/>
            <person name="Li S."/>
            <person name="Li H."/>
            <person name="Zhou J."/>
            <person name="Ni P."/>
            <person name="Dong W."/>
            <person name="Hu S."/>
            <person name="Zeng C."/>
            <person name="Zhang J."/>
            <person name="Zhang Y."/>
            <person name="Li R."/>
            <person name="Xu Z."/>
            <person name="Li S."/>
            <person name="Li X."/>
            <person name="Zheng H."/>
            <person name="Cong L."/>
            <person name="Lin L."/>
            <person name="Yin J."/>
            <person name="Geng J."/>
            <person name="Li G."/>
            <person name="Shi J."/>
            <person name="Liu J."/>
            <person name="Lv H."/>
            <person name="Li J."/>
            <person name="Wang J."/>
            <person name="Deng Y."/>
            <person name="Ran L."/>
            <person name="Shi X."/>
            <person name="Wang X."/>
            <person name="Wu Q."/>
            <person name="Li C."/>
            <person name="Ren X."/>
            <person name="Wang J."/>
            <person name="Wang X."/>
            <person name="Li D."/>
            <person name="Liu D."/>
            <person name="Zhang X."/>
            <person name="Ji Z."/>
            <person name="Zhao W."/>
            <person name="Sun Y."/>
            <person name="Zhang Z."/>
            <person name="Bao J."/>
            <person name="Han Y."/>
            <person name="Dong L."/>
            <person name="Ji J."/>
            <person name="Chen P."/>
            <person name="Wu S."/>
            <person name="Liu J."/>
            <person name="Xiao Y."/>
            <person name="Bu D."/>
            <person name="Tan J."/>
            <person name="Yang L."/>
            <person name="Ye C."/>
            <person name="Zhang J."/>
            <person name="Xu J."/>
            <person name="Zhou Y."/>
            <person name="Yu Y."/>
            <person name="Zhang B."/>
            <person name="Zhuang S."/>
            <person name="Wei H."/>
            <person name="Liu B."/>
            <person name="Lei M."/>
            <person name="Yu H."/>
            <person name="Li Y."/>
            <person name="Xu H."/>
            <person name="Wei S."/>
            <person name="He X."/>
            <person name="Fang L."/>
            <person name="Zhang Z."/>
            <person name="Zhang Y."/>
            <person name="Huang X."/>
            <person name="Su Z."/>
            <person name="Tong W."/>
            <person name="Li J."/>
            <person name="Tong Z."/>
            <person name="Li S."/>
            <person name="Ye J."/>
            <person name="Wang L."/>
            <person name="Fang L."/>
            <person name="Lei T."/>
            <person name="Chen C.-S."/>
            <person name="Chen H.-C."/>
            <person name="Xu Z."/>
            <person name="Li H."/>
            <person name="Huang H."/>
            <person name="Zhang F."/>
            <person name="Xu H."/>
            <person name="Li N."/>
            <person name="Zhao C."/>
            <person name="Li S."/>
            <person name="Dong L."/>
            <person name="Huang Y."/>
            <person name="Li L."/>
            <person name="Xi Y."/>
            <person name="Qi Q."/>
            <person name="Li W."/>
            <person name="Zhang B."/>
            <person name="Hu W."/>
            <person name="Zhang Y."/>
            <person name="Tian X."/>
            <person name="Jiao Y."/>
            <person name="Liang X."/>
            <person name="Jin J."/>
            <person name="Gao L."/>
            <person name="Zheng W."/>
            <person name="Hao B."/>
            <person name="Liu S.-M."/>
            <person name="Wang W."/>
            <person name="Yuan L."/>
            <person name="Cao M."/>
            <person name="McDermott J."/>
            <person name="Samudrala R."/>
            <person name="Wang J."/>
            <person name="Wong G.K.-S."/>
            <person name="Yang H."/>
        </authorList>
    </citation>
    <scope>NUCLEOTIDE SEQUENCE [LARGE SCALE GENOMIC DNA]</scope>
    <source>
        <strain>cv. 93-11</strain>
    </source>
</reference>
<name>LAC19_ORYSI</name>
<sequence length="590" mass="65848">MEKLSMVTSLLCAITVAVLAVAVVSGEAAVVEHTFVVHEMNATHLCNTTKIYVVNGQFPGPTVDVMEGDTVVVHVINKLPFGLTIHWHGVRQMRSCWADGAGFVTECPIPPGNEHTYRFNVTGQVGTLWWHAHVTCLRATINGAFIVRPRDGKYPFPTPAKDVPIIIGEWWELDLIELDRRMMDGNFDDNPLSATINGKLGDLSNCSRMVEESFILDVKHGESYLLRVINTALFSEYYFRVAGHTFTVVGADGNYLTPFKTDMVTVAPGEAIDVIMVADAPPAHYHMIALANQPPEPDPQIPVFTSRGLVRYAGATANNNGLPVPMPIMPNQHNTMPSYYFHANLTGLAHPERHRVPMHVDERLFVTLGLGSICRGQNTTCKRRRSPETIVVATMNNVSFAHPKTTALLERYYDGTSKGVYTEDFPIRPPRPFNYTNRDLIPPGPLEEALEPTFKATKLKRFKYNTSVEIIFQSTTLMQSDSNPMHLHGYDVFLLAQGLGNFNAKRDVRKFNYHNPQLRNTVQVPRGGWAAIRFVTDNPGMWYLHCHFEFHIIMGMATAFIVEDGPTPETSLPPPPPEFKRCGNNGLSQP</sequence>
<feature type="signal peptide" evidence="2">
    <location>
        <begin position="1"/>
        <end position="28"/>
    </location>
</feature>
<feature type="chain" id="PRO_0000291904" description="Putative laccase-19">
    <location>
        <begin position="29"/>
        <end position="590"/>
    </location>
</feature>
<feature type="domain" description="Plastocyanin-like 1">
    <location>
        <begin position="36"/>
        <end position="152"/>
    </location>
</feature>
<feature type="domain" description="Plastocyanin-like 2">
    <location>
        <begin position="161"/>
        <end position="315"/>
    </location>
</feature>
<feature type="domain" description="Plastocyanin-like 3">
    <location>
        <begin position="424"/>
        <end position="566"/>
    </location>
</feature>
<feature type="region of interest" description="Disordered" evidence="3">
    <location>
        <begin position="565"/>
        <end position="590"/>
    </location>
</feature>
<feature type="binding site" evidence="1">
    <location>
        <position position="86"/>
    </location>
    <ligand>
        <name>Cu cation</name>
        <dbReference type="ChEBI" id="CHEBI:23378"/>
        <label>1</label>
    </ligand>
</feature>
<feature type="binding site" evidence="1">
    <location>
        <position position="88"/>
    </location>
    <ligand>
        <name>Cu cation</name>
        <dbReference type="ChEBI" id="CHEBI:23378"/>
        <label>2</label>
    </ligand>
</feature>
<feature type="binding site" evidence="1">
    <location>
        <position position="131"/>
    </location>
    <ligand>
        <name>Cu cation</name>
        <dbReference type="ChEBI" id="CHEBI:23378"/>
        <label>2</label>
    </ligand>
</feature>
<feature type="binding site" evidence="1">
    <location>
        <position position="133"/>
    </location>
    <ligand>
        <name>Cu cation</name>
        <dbReference type="ChEBI" id="CHEBI:23378"/>
        <label>3</label>
    </ligand>
</feature>
<feature type="binding site" evidence="2">
    <location>
        <position position="483"/>
    </location>
    <ligand>
        <name>Cu cation</name>
        <dbReference type="ChEBI" id="CHEBI:23378"/>
        <label>4</label>
    </ligand>
</feature>
<feature type="binding site" evidence="1">
    <location>
        <position position="486"/>
    </location>
    <ligand>
        <name>Cu cation</name>
        <dbReference type="ChEBI" id="CHEBI:23378"/>
        <label>1</label>
    </ligand>
</feature>
<feature type="binding site" evidence="1">
    <location>
        <position position="488"/>
    </location>
    <ligand>
        <name>Cu cation</name>
        <dbReference type="ChEBI" id="CHEBI:23378"/>
        <label>3</label>
    </ligand>
</feature>
<feature type="binding site" evidence="1">
    <location>
        <position position="545"/>
    </location>
    <ligand>
        <name>Cu cation</name>
        <dbReference type="ChEBI" id="CHEBI:23378"/>
        <label>3</label>
    </ligand>
</feature>
<feature type="binding site" evidence="2">
    <location>
        <position position="546"/>
    </location>
    <ligand>
        <name>Cu cation</name>
        <dbReference type="ChEBI" id="CHEBI:23378"/>
        <label>4</label>
    </ligand>
</feature>
<feature type="binding site" evidence="1">
    <location>
        <position position="547"/>
    </location>
    <ligand>
        <name>Cu cation</name>
        <dbReference type="ChEBI" id="CHEBI:23378"/>
        <label>2</label>
    </ligand>
</feature>
<feature type="binding site" evidence="2">
    <location>
        <position position="551"/>
    </location>
    <ligand>
        <name>Cu cation</name>
        <dbReference type="ChEBI" id="CHEBI:23378"/>
        <label>4</label>
    </ligand>
</feature>
<feature type="binding site" evidence="2">
    <location>
        <position position="556"/>
    </location>
    <ligand>
        <name>Cu cation</name>
        <dbReference type="ChEBI" id="CHEBI:23378"/>
        <label>4</label>
    </ligand>
</feature>
<feature type="glycosylation site" description="N-linked (GlcNAc...) asparagine" evidence="2">
    <location>
        <position position="41"/>
    </location>
</feature>
<feature type="glycosylation site" description="N-linked (GlcNAc...) asparagine" evidence="2">
    <location>
        <position position="47"/>
    </location>
</feature>
<feature type="glycosylation site" description="N-linked (GlcNAc...) asparagine" evidence="2">
    <location>
        <position position="120"/>
    </location>
</feature>
<feature type="glycosylation site" description="N-linked (GlcNAc...) asparagine" evidence="2">
    <location>
        <position position="205"/>
    </location>
</feature>
<feature type="glycosylation site" description="N-linked (GlcNAc...) asparagine" evidence="2">
    <location>
        <position position="344"/>
    </location>
</feature>
<feature type="glycosylation site" description="N-linked (GlcNAc...) asparagine" evidence="2">
    <location>
        <position position="378"/>
    </location>
</feature>
<feature type="glycosylation site" description="N-linked (GlcNAc...) asparagine" evidence="2">
    <location>
        <position position="397"/>
    </location>
</feature>
<feature type="glycosylation site" description="N-linked (GlcNAc...) asparagine" evidence="2">
    <location>
        <position position="434"/>
    </location>
</feature>
<feature type="glycosylation site" description="N-linked (GlcNAc...) asparagine" evidence="2">
    <location>
        <position position="465"/>
    </location>
</feature>